<evidence type="ECO:0000255" key="1">
    <source>
        <dbReference type="HAMAP-Rule" id="MF_00208"/>
    </source>
</evidence>
<sequence length="487" mass="55088">MYLQELLKGIQVEKIIGNMDIDIEDIYFDSRFVTQKSLFICIEGFKTTGSLYINEAIQRGAVAILSEKEIAIEGTTTIKVENSRKALAAVASRFYKFPTNTLKLVGVTGTNGKTSITYMVKSILGYYNINVGLIGTISNWIGNKEIEAVRTTPESLELQKILNEMVEQKVDTCVMEVSSHALELGRVDHTKFTMGIFTNLTPEHLDFHEDMDHYRNAKKKLFYKTTLCNIINVDDIHGKMIAEELKEEQIPLITFGMNQQADVYATDLKINLKGVSFQLHMGQDSKEFHVKIPGLFTVYNAMPSILICYILGLSLEEISIALEAMKGVPGRFEVVEEIQRNSVIIDYAHTPDALENILISTRKFAPKRIITVFGCGGDRDKTKRRIMGEISGKYSDYSIITSDNPRTEEPLKIIEMIEDGIKQVTDQYKIMIDRRCAIEYAMKIAEEKDIIILAGKGHEKTQVIGNEVFYFDDREVALEIARKEGLI</sequence>
<reference key="1">
    <citation type="submission" date="2007-10" db="EMBL/GenBank/DDBJ databases">
        <title>Complete genome of Alkaliphilus oremlandii OhILAs.</title>
        <authorList>
            <person name="Copeland A."/>
            <person name="Lucas S."/>
            <person name="Lapidus A."/>
            <person name="Barry K."/>
            <person name="Detter J.C."/>
            <person name="Glavina del Rio T."/>
            <person name="Hammon N."/>
            <person name="Israni S."/>
            <person name="Dalin E."/>
            <person name="Tice H."/>
            <person name="Pitluck S."/>
            <person name="Chain P."/>
            <person name="Malfatti S."/>
            <person name="Shin M."/>
            <person name="Vergez L."/>
            <person name="Schmutz J."/>
            <person name="Larimer F."/>
            <person name="Land M."/>
            <person name="Hauser L."/>
            <person name="Kyrpides N."/>
            <person name="Mikhailova N."/>
            <person name="Stolz J.F."/>
            <person name="Dawson A."/>
            <person name="Fisher E."/>
            <person name="Crable B."/>
            <person name="Perera E."/>
            <person name="Lisak J."/>
            <person name="Ranganathan M."/>
            <person name="Basu P."/>
            <person name="Richardson P."/>
        </authorList>
    </citation>
    <scope>NUCLEOTIDE SEQUENCE [LARGE SCALE GENOMIC DNA]</scope>
    <source>
        <strain>OhILAs</strain>
    </source>
</reference>
<dbReference type="EC" id="6.3.2.13" evidence="1"/>
<dbReference type="EMBL" id="CP000853">
    <property type="protein sequence ID" value="ABW18918.1"/>
    <property type="molecule type" value="Genomic_DNA"/>
</dbReference>
<dbReference type="RefSeq" id="WP_012159230.1">
    <property type="nucleotide sequence ID" value="NC_009922.1"/>
</dbReference>
<dbReference type="SMR" id="A8MH31"/>
<dbReference type="STRING" id="350688.Clos_1374"/>
<dbReference type="KEGG" id="aoe:Clos_1374"/>
<dbReference type="eggNOG" id="COG0769">
    <property type="taxonomic scope" value="Bacteria"/>
</dbReference>
<dbReference type="HOGENOM" id="CLU_022291_4_1_9"/>
<dbReference type="OrthoDB" id="9800958at2"/>
<dbReference type="UniPathway" id="UPA00219"/>
<dbReference type="Proteomes" id="UP000000269">
    <property type="component" value="Chromosome"/>
</dbReference>
<dbReference type="GO" id="GO:0005737">
    <property type="term" value="C:cytoplasm"/>
    <property type="evidence" value="ECO:0007669"/>
    <property type="project" value="UniProtKB-SubCell"/>
</dbReference>
<dbReference type="GO" id="GO:0005524">
    <property type="term" value="F:ATP binding"/>
    <property type="evidence" value="ECO:0007669"/>
    <property type="project" value="UniProtKB-UniRule"/>
</dbReference>
<dbReference type="GO" id="GO:0000287">
    <property type="term" value="F:magnesium ion binding"/>
    <property type="evidence" value="ECO:0007669"/>
    <property type="project" value="UniProtKB-UniRule"/>
</dbReference>
<dbReference type="GO" id="GO:0008765">
    <property type="term" value="F:UDP-N-acetylmuramoylalanyl-D-glutamate-2,6-diaminopimelate ligase activity"/>
    <property type="evidence" value="ECO:0007669"/>
    <property type="project" value="UniProtKB-UniRule"/>
</dbReference>
<dbReference type="GO" id="GO:0051301">
    <property type="term" value="P:cell division"/>
    <property type="evidence" value="ECO:0007669"/>
    <property type="project" value="UniProtKB-KW"/>
</dbReference>
<dbReference type="GO" id="GO:0071555">
    <property type="term" value="P:cell wall organization"/>
    <property type="evidence" value="ECO:0007669"/>
    <property type="project" value="UniProtKB-KW"/>
</dbReference>
<dbReference type="GO" id="GO:0009252">
    <property type="term" value="P:peptidoglycan biosynthetic process"/>
    <property type="evidence" value="ECO:0007669"/>
    <property type="project" value="UniProtKB-UniRule"/>
</dbReference>
<dbReference type="GO" id="GO:0008360">
    <property type="term" value="P:regulation of cell shape"/>
    <property type="evidence" value="ECO:0007669"/>
    <property type="project" value="UniProtKB-KW"/>
</dbReference>
<dbReference type="Gene3D" id="3.90.190.20">
    <property type="entry name" value="Mur ligase, C-terminal domain"/>
    <property type="match status" value="1"/>
</dbReference>
<dbReference type="Gene3D" id="3.40.1190.10">
    <property type="entry name" value="Mur-like, catalytic domain"/>
    <property type="match status" value="1"/>
</dbReference>
<dbReference type="Gene3D" id="3.40.1390.10">
    <property type="entry name" value="MurE/MurF, N-terminal domain"/>
    <property type="match status" value="1"/>
</dbReference>
<dbReference type="HAMAP" id="MF_00208">
    <property type="entry name" value="MurE"/>
    <property type="match status" value="1"/>
</dbReference>
<dbReference type="InterPro" id="IPR036565">
    <property type="entry name" value="Mur-like_cat_sf"/>
</dbReference>
<dbReference type="InterPro" id="IPR004101">
    <property type="entry name" value="Mur_ligase_C"/>
</dbReference>
<dbReference type="InterPro" id="IPR036615">
    <property type="entry name" value="Mur_ligase_C_dom_sf"/>
</dbReference>
<dbReference type="InterPro" id="IPR013221">
    <property type="entry name" value="Mur_ligase_cen"/>
</dbReference>
<dbReference type="InterPro" id="IPR000713">
    <property type="entry name" value="Mur_ligase_N"/>
</dbReference>
<dbReference type="InterPro" id="IPR035911">
    <property type="entry name" value="MurE/MurF_N"/>
</dbReference>
<dbReference type="InterPro" id="IPR005761">
    <property type="entry name" value="UDP-N-AcMur-Glu-dNH2Pim_ligase"/>
</dbReference>
<dbReference type="NCBIfam" id="TIGR01085">
    <property type="entry name" value="murE"/>
    <property type="match status" value="1"/>
</dbReference>
<dbReference type="NCBIfam" id="NF001124">
    <property type="entry name" value="PRK00139.1-2"/>
    <property type="match status" value="1"/>
</dbReference>
<dbReference type="NCBIfam" id="NF001126">
    <property type="entry name" value="PRK00139.1-4"/>
    <property type="match status" value="1"/>
</dbReference>
<dbReference type="PANTHER" id="PTHR23135">
    <property type="entry name" value="MUR LIGASE FAMILY MEMBER"/>
    <property type="match status" value="1"/>
</dbReference>
<dbReference type="PANTHER" id="PTHR23135:SF4">
    <property type="entry name" value="UDP-N-ACETYLMURAMOYL-L-ALANYL-D-GLUTAMATE--2,6-DIAMINOPIMELATE LIGASE MURE HOMOLOG, CHLOROPLASTIC"/>
    <property type="match status" value="1"/>
</dbReference>
<dbReference type="Pfam" id="PF01225">
    <property type="entry name" value="Mur_ligase"/>
    <property type="match status" value="1"/>
</dbReference>
<dbReference type="Pfam" id="PF02875">
    <property type="entry name" value="Mur_ligase_C"/>
    <property type="match status" value="1"/>
</dbReference>
<dbReference type="Pfam" id="PF08245">
    <property type="entry name" value="Mur_ligase_M"/>
    <property type="match status" value="1"/>
</dbReference>
<dbReference type="SUPFAM" id="SSF53623">
    <property type="entry name" value="MurD-like peptide ligases, catalytic domain"/>
    <property type="match status" value="1"/>
</dbReference>
<dbReference type="SUPFAM" id="SSF53244">
    <property type="entry name" value="MurD-like peptide ligases, peptide-binding domain"/>
    <property type="match status" value="1"/>
</dbReference>
<dbReference type="SUPFAM" id="SSF63418">
    <property type="entry name" value="MurE/MurF N-terminal domain"/>
    <property type="match status" value="1"/>
</dbReference>
<feature type="chain" id="PRO_1000058586" description="UDP-N-acetylmuramoyl-L-alanyl-D-glutamate--2,6-diaminopimelate ligase">
    <location>
        <begin position="1"/>
        <end position="487"/>
    </location>
</feature>
<feature type="short sequence motif" description="Meso-diaminopimelate recognition motif">
    <location>
        <begin position="403"/>
        <end position="406"/>
    </location>
</feature>
<feature type="binding site" evidence="1">
    <location>
        <position position="30"/>
    </location>
    <ligand>
        <name>UDP-N-acetyl-alpha-D-muramoyl-L-alanyl-D-glutamate</name>
        <dbReference type="ChEBI" id="CHEBI:83900"/>
    </ligand>
</feature>
<feature type="binding site" evidence="1">
    <location>
        <begin position="109"/>
        <end position="115"/>
    </location>
    <ligand>
        <name>ATP</name>
        <dbReference type="ChEBI" id="CHEBI:30616"/>
    </ligand>
</feature>
<feature type="binding site" evidence="1">
    <location>
        <begin position="151"/>
        <end position="152"/>
    </location>
    <ligand>
        <name>UDP-N-acetyl-alpha-D-muramoyl-L-alanyl-D-glutamate</name>
        <dbReference type="ChEBI" id="CHEBI:83900"/>
    </ligand>
</feature>
<feature type="binding site" evidence="1">
    <location>
        <position position="178"/>
    </location>
    <ligand>
        <name>UDP-N-acetyl-alpha-D-muramoyl-L-alanyl-D-glutamate</name>
        <dbReference type="ChEBI" id="CHEBI:83900"/>
    </ligand>
</feature>
<feature type="binding site" evidence="1">
    <location>
        <position position="186"/>
    </location>
    <ligand>
        <name>UDP-N-acetyl-alpha-D-muramoyl-L-alanyl-D-glutamate</name>
        <dbReference type="ChEBI" id="CHEBI:83900"/>
    </ligand>
</feature>
<feature type="binding site" evidence="1">
    <location>
        <position position="379"/>
    </location>
    <ligand>
        <name>meso-2,6-diaminopimelate</name>
        <dbReference type="ChEBI" id="CHEBI:57791"/>
    </ligand>
</feature>
<feature type="binding site" evidence="1">
    <location>
        <begin position="403"/>
        <end position="406"/>
    </location>
    <ligand>
        <name>meso-2,6-diaminopimelate</name>
        <dbReference type="ChEBI" id="CHEBI:57791"/>
    </ligand>
</feature>
<feature type="binding site" evidence="1">
    <location>
        <position position="455"/>
    </location>
    <ligand>
        <name>meso-2,6-diaminopimelate</name>
        <dbReference type="ChEBI" id="CHEBI:57791"/>
    </ligand>
</feature>
<feature type="binding site" evidence="1">
    <location>
        <position position="459"/>
    </location>
    <ligand>
        <name>meso-2,6-diaminopimelate</name>
        <dbReference type="ChEBI" id="CHEBI:57791"/>
    </ligand>
</feature>
<feature type="modified residue" description="N6-carboxylysine" evidence="1">
    <location>
        <position position="218"/>
    </location>
</feature>
<name>MURE_ALKOO</name>
<proteinExistence type="inferred from homology"/>
<gene>
    <name evidence="1" type="primary">murE</name>
    <name type="ordered locus">Clos_1374</name>
</gene>
<keyword id="KW-0067">ATP-binding</keyword>
<keyword id="KW-0131">Cell cycle</keyword>
<keyword id="KW-0132">Cell division</keyword>
<keyword id="KW-0133">Cell shape</keyword>
<keyword id="KW-0961">Cell wall biogenesis/degradation</keyword>
<keyword id="KW-0963">Cytoplasm</keyword>
<keyword id="KW-0436">Ligase</keyword>
<keyword id="KW-0460">Magnesium</keyword>
<keyword id="KW-0547">Nucleotide-binding</keyword>
<keyword id="KW-0573">Peptidoglycan synthesis</keyword>
<keyword id="KW-1185">Reference proteome</keyword>
<organism>
    <name type="scientific">Alkaliphilus oremlandii (strain OhILAs)</name>
    <name type="common">Clostridium oremlandii (strain OhILAs)</name>
    <dbReference type="NCBI Taxonomy" id="350688"/>
    <lineage>
        <taxon>Bacteria</taxon>
        <taxon>Bacillati</taxon>
        <taxon>Bacillota</taxon>
        <taxon>Clostridia</taxon>
        <taxon>Peptostreptococcales</taxon>
        <taxon>Natronincolaceae</taxon>
        <taxon>Alkaliphilus</taxon>
    </lineage>
</organism>
<protein>
    <recommendedName>
        <fullName evidence="1">UDP-N-acetylmuramoyl-L-alanyl-D-glutamate--2,6-diaminopimelate ligase</fullName>
        <ecNumber evidence="1">6.3.2.13</ecNumber>
    </recommendedName>
    <alternativeName>
        <fullName evidence="1">Meso-A2pm-adding enzyme</fullName>
    </alternativeName>
    <alternativeName>
        <fullName evidence="1">Meso-diaminopimelate-adding enzyme</fullName>
    </alternativeName>
    <alternativeName>
        <fullName evidence="1">UDP-MurNAc-L-Ala-D-Glu:meso-diaminopimelate ligase</fullName>
    </alternativeName>
    <alternativeName>
        <fullName evidence="1">UDP-MurNAc-tripeptide synthetase</fullName>
    </alternativeName>
    <alternativeName>
        <fullName evidence="1">UDP-N-acetylmuramyl-tripeptide synthetase</fullName>
    </alternativeName>
</protein>
<accession>A8MH31</accession>
<comment type="function">
    <text evidence="1">Catalyzes the addition of meso-diaminopimelic acid to the nucleotide precursor UDP-N-acetylmuramoyl-L-alanyl-D-glutamate (UMAG) in the biosynthesis of bacterial cell-wall peptidoglycan.</text>
</comment>
<comment type="catalytic activity">
    <reaction evidence="1">
        <text>UDP-N-acetyl-alpha-D-muramoyl-L-alanyl-D-glutamate + meso-2,6-diaminopimelate + ATP = UDP-N-acetyl-alpha-D-muramoyl-L-alanyl-gamma-D-glutamyl-meso-2,6-diaminopimelate + ADP + phosphate + H(+)</text>
        <dbReference type="Rhea" id="RHEA:23676"/>
        <dbReference type="ChEBI" id="CHEBI:15378"/>
        <dbReference type="ChEBI" id="CHEBI:30616"/>
        <dbReference type="ChEBI" id="CHEBI:43474"/>
        <dbReference type="ChEBI" id="CHEBI:57791"/>
        <dbReference type="ChEBI" id="CHEBI:83900"/>
        <dbReference type="ChEBI" id="CHEBI:83905"/>
        <dbReference type="ChEBI" id="CHEBI:456216"/>
        <dbReference type="EC" id="6.3.2.13"/>
    </reaction>
</comment>
<comment type="cofactor">
    <cofactor evidence="1">
        <name>Mg(2+)</name>
        <dbReference type="ChEBI" id="CHEBI:18420"/>
    </cofactor>
</comment>
<comment type="pathway">
    <text evidence="1">Cell wall biogenesis; peptidoglycan biosynthesis.</text>
</comment>
<comment type="subcellular location">
    <subcellularLocation>
        <location evidence="1">Cytoplasm</location>
    </subcellularLocation>
</comment>
<comment type="PTM">
    <text evidence="1">Carboxylation is probably crucial for Mg(2+) binding and, consequently, for the gamma-phosphate positioning of ATP.</text>
</comment>
<comment type="similarity">
    <text evidence="1">Belongs to the MurCDEF family. MurE subfamily.</text>
</comment>